<name>PSAJ_SYNSC</name>
<reference key="1">
    <citation type="submission" date="2005-07" db="EMBL/GenBank/DDBJ databases">
        <title>Complete sequence of Synechococcus sp. CC9605.</title>
        <authorList>
            <consortium name="US DOE Joint Genome Institute"/>
            <person name="Copeland A."/>
            <person name="Lucas S."/>
            <person name="Lapidus A."/>
            <person name="Barry K."/>
            <person name="Detter J.C."/>
            <person name="Glavina T."/>
            <person name="Hammon N."/>
            <person name="Israni S."/>
            <person name="Pitluck S."/>
            <person name="Schmutz J."/>
            <person name="Martinez M."/>
            <person name="Larimer F."/>
            <person name="Land M."/>
            <person name="Kyrpides N."/>
            <person name="Ivanova N."/>
            <person name="Richardson P."/>
        </authorList>
    </citation>
    <scope>NUCLEOTIDE SEQUENCE [LARGE SCALE GENOMIC DNA]</scope>
    <source>
        <strain>CC9605</strain>
    </source>
</reference>
<evidence type="ECO:0000255" key="1">
    <source>
        <dbReference type="HAMAP-Rule" id="MF_00522"/>
    </source>
</evidence>
<protein>
    <recommendedName>
        <fullName evidence="1">Photosystem I reaction center subunit IX</fullName>
    </recommendedName>
</protein>
<organism>
    <name type="scientific">Synechococcus sp. (strain CC9605)</name>
    <dbReference type="NCBI Taxonomy" id="110662"/>
    <lineage>
        <taxon>Bacteria</taxon>
        <taxon>Bacillati</taxon>
        <taxon>Cyanobacteriota</taxon>
        <taxon>Cyanophyceae</taxon>
        <taxon>Synechococcales</taxon>
        <taxon>Synechococcaceae</taxon>
        <taxon>Synechococcus</taxon>
    </lineage>
</organism>
<proteinExistence type="inferred from homology"/>
<accession>Q3ALX5</accession>
<sequence>MNKFLTAAPVVAAIWFTATAGILIEWNRFFPDLLFHPM</sequence>
<comment type="function">
    <text evidence="1">May help in the organization of the PsaE and PsaF subunits.</text>
</comment>
<comment type="subcellular location">
    <subcellularLocation>
        <location evidence="1">Cellular thylakoid membrane</location>
        <topology evidence="1">Single-pass membrane protein</topology>
    </subcellularLocation>
</comment>
<comment type="similarity">
    <text evidence="1">Belongs to the PsaJ family.</text>
</comment>
<gene>
    <name evidence="1" type="primary">psaJ</name>
    <name type="ordered locus">Syncc9605_0633</name>
</gene>
<feature type="chain" id="PRO_0000268762" description="Photosystem I reaction center subunit IX">
    <location>
        <begin position="1"/>
        <end position="38"/>
    </location>
</feature>
<feature type="transmembrane region" description="Helical" evidence="1">
    <location>
        <begin position="4"/>
        <end position="24"/>
    </location>
</feature>
<keyword id="KW-0472">Membrane</keyword>
<keyword id="KW-0602">Photosynthesis</keyword>
<keyword id="KW-0603">Photosystem I</keyword>
<keyword id="KW-0793">Thylakoid</keyword>
<keyword id="KW-0812">Transmembrane</keyword>
<keyword id="KW-1133">Transmembrane helix</keyword>
<dbReference type="EMBL" id="CP000110">
    <property type="protein sequence ID" value="ABB34407.1"/>
    <property type="molecule type" value="Genomic_DNA"/>
</dbReference>
<dbReference type="RefSeq" id="WP_006850741.1">
    <property type="nucleotide sequence ID" value="NC_007516.1"/>
</dbReference>
<dbReference type="SMR" id="Q3ALX5"/>
<dbReference type="STRING" id="110662.Syncc9605_0633"/>
<dbReference type="KEGG" id="syd:Syncc9605_0633"/>
<dbReference type="eggNOG" id="ENOG5033A5A">
    <property type="taxonomic scope" value="Bacteria"/>
</dbReference>
<dbReference type="HOGENOM" id="CLU_212133_1_1_3"/>
<dbReference type="OrthoDB" id="532702at2"/>
<dbReference type="GO" id="GO:0009522">
    <property type="term" value="C:photosystem I"/>
    <property type="evidence" value="ECO:0007669"/>
    <property type="project" value="UniProtKB-KW"/>
</dbReference>
<dbReference type="GO" id="GO:0031676">
    <property type="term" value="C:plasma membrane-derived thylakoid membrane"/>
    <property type="evidence" value="ECO:0007669"/>
    <property type="project" value="UniProtKB-SubCell"/>
</dbReference>
<dbReference type="GO" id="GO:0015979">
    <property type="term" value="P:photosynthesis"/>
    <property type="evidence" value="ECO:0007669"/>
    <property type="project" value="UniProtKB-UniRule"/>
</dbReference>
<dbReference type="Gene3D" id="1.20.5.510">
    <property type="entry name" value="Single helix bin"/>
    <property type="match status" value="1"/>
</dbReference>
<dbReference type="HAMAP" id="MF_00522">
    <property type="entry name" value="PSI_PsaJ"/>
    <property type="match status" value="1"/>
</dbReference>
<dbReference type="InterPro" id="IPR002615">
    <property type="entry name" value="PSI_PsaJ"/>
</dbReference>
<dbReference type="InterPro" id="IPR036062">
    <property type="entry name" value="PSI_PsaJ_sf"/>
</dbReference>
<dbReference type="NCBIfam" id="NF002743">
    <property type="entry name" value="PRK02733.1"/>
    <property type="match status" value="1"/>
</dbReference>
<dbReference type="PANTHER" id="PTHR36082">
    <property type="match status" value="1"/>
</dbReference>
<dbReference type="PANTHER" id="PTHR36082:SF2">
    <property type="entry name" value="PHOTOSYSTEM I REACTION CENTER SUBUNIT IX"/>
    <property type="match status" value="1"/>
</dbReference>
<dbReference type="Pfam" id="PF01701">
    <property type="entry name" value="PSI_PsaJ"/>
    <property type="match status" value="1"/>
</dbReference>
<dbReference type="SUPFAM" id="SSF81544">
    <property type="entry name" value="Subunit IX of photosystem I reaction centre, PsaJ"/>
    <property type="match status" value="1"/>
</dbReference>